<feature type="chain" id="PRO_0000281055" description="CDP-diacylglycerol--glycerol-3-phosphate 3-phosphatidyltransferase">
    <location>
        <begin position="1"/>
        <end position="178"/>
    </location>
</feature>
<feature type="transmembrane region" description="Helical" evidence="2">
    <location>
        <begin position="5"/>
        <end position="25"/>
    </location>
</feature>
<feature type="transmembrane region" description="Helical" evidence="2">
    <location>
        <begin position="32"/>
        <end position="52"/>
    </location>
</feature>
<feature type="transmembrane region" description="Helical" evidence="2">
    <location>
        <begin position="61"/>
        <end position="81"/>
    </location>
</feature>
<feature type="transmembrane region" description="Helical" evidence="2">
    <location>
        <begin position="145"/>
        <end position="165"/>
    </location>
</feature>
<dbReference type="EC" id="2.7.8.5"/>
<dbReference type="EMBL" id="AE017197">
    <property type="protein sequence ID" value="AAU03567.1"/>
    <property type="molecule type" value="Genomic_DNA"/>
</dbReference>
<dbReference type="RefSeq" id="WP_011190554.1">
    <property type="nucleotide sequence ID" value="NC_006142.1"/>
</dbReference>
<dbReference type="SMR" id="Q68XS5"/>
<dbReference type="KEGG" id="rty:RT0081"/>
<dbReference type="eggNOG" id="COG0558">
    <property type="taxonomic scope" value="Bacteria"/>
</dbReference>
<dbReference type="HOGENOM" id="CLU_051314_2_2_5"/>
<dbReference type="OrthoDB" id="9796672at2"/>
<dbReference type="UniPathway" id="UPA00084">
    <property type="reaction ID" value="UER00503"/>
</dbReference>
<dbReference type="Proteomes" id="UP000000604">
    <property type="component" value="Chromosome"/>
</dbReference>
<dbReference type="GO" id="GO:0005886">
    <property type="term" value="C:plasma membrane"/>
    <property type="evidence" value="ECO:0007669"/>
    <property type="project" value="UniProtKB-SubCell"/>
</dbReference>
<dbReference type="GO" id="GO:0008444">
    <property type="term" value="F:CDP-diacylglycerol-glycerol-3-phosphate 3-phosphatidyltransferase activity"/>
    <property type="evidence" value="ECO:0007669"/>
    <property type="project" value="UniProtKB-EC"/>
</dbReference>
<dbReference type="GO" id="GO:0006655">
    <property type="term" value="P:phosphatidylglycerol biosynthetic process"/>
    <property type="evidence" value="ECO:0007669"/>
    <property type="project" value="UniProtKB-UniPathway"/>
</dbReference>
<dbReference type="Gene3D" id="1.20.120.1760">
    <property type="match status" value="1"/>
</dbReference>
<dbReference type="InterPro" id="IPR050324">
    <property type="entry name" value="CDP-alcohol_PTase-I"/>
</dbReference>
<dbReference type="InterPro" id="IPR000462">
    <property type="entry name" value="CDP-OH_P_trans"/>
</dbReference>
<dbReference type="InterPro" id="IPR043130">
    <property type="entry name" value="CDP-OH_PTrfase_TM_dom"/>
</dbReference>
<dbReference type="InterPro" id="IPR048254">
    <property type="entry name" value="CDP_ALCOHOL_P_TRANSF_CS"/>
</dbReference>
<dbReference type="InterPro" id="IPR004570">
    <property type="entry name" value="Phosphatidylglycerol_P_synth"/>
</dbReference>
<dbReference type="NCBIfam" id="TIGR00560">
    <property type="entry name" value="pgsA"/>
    <property type="match status" value="1"/>
</dbReference>
<dbReference type="PANTHER" id="PTHR14269:SF62">
    <property type="entry name" value="CDP-DIACYLGLYCEROL--GLYCEROL-3-PHOSPHATE 3-PHOSPHATIDYLTRANSFERASE 1, CHLOROPLASTIC"/>
    <property type="match status" value="1"/>
</dbReference>
<dbReference type="PANTHER" id="PTHR14269">
    <property type="entry name" value="CDP-DIACYLGLYCEROL--GLYCEROL-3-PHOSPHATE 3-PHOSPHATIDYLTRANSFERASE-RELATED"/>
    <property type="match status" value="1"/>
</dbReference>
<dbReference type="Pfam" id="PF01066">
    <property type="entry name" value="CDP-OH_P_transf"/>
    <property type="match status" value="1"/>
</dbReference>
<dbReference type="PIRSF" id="PIRSF000847">
    <property type="entry name" value="Phos_ph_gly_syn"/>
    <property type="match status" value="1"/>
</dbReference>
<dbReference type="PROSITE" id="PS00379">
    <property type="entry name" value="CDP_ALCOHOL_P_TRANSF"/>
    <property type="match status" value="1"/>
</dbReference>
<comment type="function">
    <text evidence="1">This protein catalyzes the committed step to the synthesis of the acidic phospholipids.</text>
</comment>
<comment type="catalytic activity">
    <reaction>
        <text>a CDP-1,2-diacyl-sn-glycerol + sn-glycerol 3-phosphate = a 1,2-diacyl-sn-glycero-3-phospho-(1'-sn-glycero-3'-phosphate) + CMP + H(+)</text>
        <dbReference type="Rhea" id="RHEA:12593"/>
        <dbReference type="ChEBI" id="CHEBI:15378"/>
        <dbReference type="ChEBI" id="CHEBI:57597"/>
        <dbReference type="ChEBI" id="CHEBI:58332"/>
        <dbReference type="ChEBI" id="CHEBI:60110"/>
        <dbReference type="ChEBI" id="CHEBI:60377"/>
        <dbReference type="EC" id="2.7.8.5"/>
    </reaction>
</comment>
<comment type="pathway">
    <text>Phospholipid metabolism; phosphatidylglycerol biosynthesis; phosphatidylglycerol from CDP-diacylglycerol: step 1/2.</text>
</comment>
<comment type="subcellular location">
    <subcellularLocation>
        <location evidence="1">Cell membrane</location>
        <topology evidence="1">Multi-pass membrane protein</topology>
    </subcellularLocation>
</comment>
<comment type="similarity">
    <text evidence="3">Belongs to the CDP-alcohol phosphatidyltransferase class-I family.</text>
</comment>
<proteinExistence type="inferred from homology"/>
<accession>Q68XS5</accession>
<protein>
    <recommendedName>
        <fullName>CDP-diacylglycerol--glycerol-3-phosphate 3-phosphatidyltransferase</fullName>
        <ecNumber>2.7.8.5</ecNumber>
    </recommendedName>
</protein>
<keyword id="KW-1003">Cell membrane</keyword>
<keyword id="KW-0444">Lipid biosynthesis</keyword>
<keyword id="KW-0443">Lipid metabolism</keyword>
<keyword id="KW-0472">Membrane</keyword>
<keyword id="KW-0594">Phospholipid biosynthesis</keyword>
<keyword id="KW-1208">Phospholipid metabolism</keyword>
<keyword id="KW-0808">Transferase</keyword>
<keyword id="KW-0812">Transmembrane</keyword>
<keyword id="KW-1133">Transmembrane helix</keyword>
<organism>
    <name type="scientific">Rickettsia typhi (strain ATCC VR-144 / Wilmington)</name>
    <dbReference type="NCBI Taxonomy" id="257363"/>
    <lineage>
        <taxon>Bacteria</taxon>
        <taxon>Pseudomonadati</taxon>
        <taxon>Pseudomonadota</taxon>
        <taxon>Alphaproteobacteria</taxon>
        <taxon>Rickettsiales</taxon>
        <taxon>Rickettsiaceae</taxon>
        <taxon>Rickettsieae</taxon>
        <taxon>Rickettsia</taxon>
        <taxon>typhus group</taxon>
    </lineage>
</organism>
<gene>
    <name type="primary">pgsA</name>
    <name type="ordered locus">RT0081</name>
</gene>
<name>PGSA_RICTY</name>
<evidence type="ECO:0000250" key="1"/>
<evidence type="ECO:0000255" key="2"/>
<evidence type="ECO:0000305" key="3"/>
<sequence length="178" mass="19959">MKNLPNYLTIARIMVIPVIILLFYINNSLARKLGALLFVLASITDFFDGYIARKYNLVTSFGKMFDPIADKLLVGCVTIMLLKKDNVDEIPCLLILAREFLVSGLREFLALVKVSVPVSRLAKLKTFLQMFALSILILGSKGSGIIYLDIVGEIILWIAAFLTIITGYSYFKACKTYF</sequence>
<reference key="1">
    <citation type="journal article" date="2004" name="J. Bacteriol.">
        <title>Complete genome sequence of Rickettsia typhi and comparison with sequences of other Rickettsiae.</title>
        <authorList>
            <person name="McLeod M.P."/>
            <person name="Qin X."/>
            <person name="Karpathy S.E."/>
            <person name="Gioia J."/>
            <person name="Highlander S.K."/>
            <person name="Fox G.E."/>
            <person name="McNeill T.Z."/>
            <person name="Jiang H."/>
            <person name="Muzny D."/>
            <person name="Jacob L.S."/>
            <person name="Hawes A.C."/>
            <person name="Sodergren E."/>
            <person name="Gill R."/>
            <person name="Hume J."/>
            <person name="Morgan M."/>
            <person name="Fan G."/>
            <person name="Amin A.G."/>
            <person name="Gibbs R.A."/>
            <person name="Hong C."/>
            <person name="Yu X.-J."/>
            <person name="Walker D.H."/>
            <person name="Weinstock G.M."/>
        </authorList>
    </citation>
    <scope>NUCLEOTIDE SEQUENCE [LARGE SCALE GENOMIC DNA]</scope>
    <source>
        <strain>ATCC VR-144 / Wilmington</strain>
    </source>
</reference>